<reference key="1">
    <citation type="submission" date="2004-07" db="EMBL/GenBank/DDBJ databases">
        <authorList>
            <consortium name="NIH - Xenopus Gene Collection (XGC) project"/>
        </authorList>
    </citation>
    <scope>NUCLEOTIDE SEQUENCE [LARGE SCALE MRNA]</scope>
    <source>
        <tissue>Embryo</tissue>
    </source>
</reference>
<reference key="2">
    <citation type="journal article" date="2016" name="Elife">
        <title>Cooperation of the ER-shaping proteins atlastin, lunapark, and reticulons to generate a tubular membrane network.</title>
        <authorList>
            <person name="Wang S."/>
            <person name="Tukachinsky H."/>
            <person name="Romano F.B."/>
            <person name="Rapoport T.A."/>
        </authorList>
    </citation>
    <scope>FUNCTION</scope>
    <scope>SUBUNIT</scope>
    <scope>PHOSPHORYLATION AT THR-159; SER-177; SER-179; SER-188; SER-192; THR-198; SER-206; SER-215; THR-219; SER-222; SER-231 AND SER-325</scope>
    <scope>IDENTIFICATION BY MASS SPECTROMETRY</scope>
</reference>
<organism>
    <name type="scientific">Xenopus laevis</name>
    <name type="common">African clawed frog</name>
    <dbReference type="NCBI Taxonomy" id="8355"/>
    <lineage>
        <taxon>Eukaryota</taxon>
        <taxon>Metazoa</taxon>
        <taxon>Chordata</taxon>
        <taxon>Craniata</taxon>
        <taxon>Vertebrata</taxon>
        <taxon>Euteleostomi</taxon>
        <taxon>Amphibia</taxon>
        <taxon>Batrachia</taxon>
        <taxon>Anura</taxon>
        <taxon>Pipoidea</taxon>
        <taxon>Pipidae</taxon>
        <taxon>Xenopodinae</taxon>
        <taxon>Xenopus</taxon>
        <taxon>Xenopus</taxon>
    </lineage>
</organism>
<gene>
    <name type="primary">lnpk</name>
    <name type="synonym">lnp</name>
</gene>
<feature type="chain" id="PRO_0000248317" description="Endoplasmic reticulum junction formation protein lunapark">
    <location>
        <begin position="1"/>
        <end position="440"/>
    </location>
</feature>
<feature type="topological domain" description="Cytoplasmic" evidence="2">
    <location>
        <begin position="1"/>
        <end position="45"/>
    </location>
</feature>
<feature type="transmembrane region" description="Helical" evidence="3">
    <location>
        <begin position="46"/>
        <end position="66"/>
    </location>
</feature>
<feature type="topological domain" description="Lumenal" evidence="2">
    <location>
        <begin position="67"/>
        <end position="77"/>
    </location>
</feature>
<feature type="transmembrane region" description="Helical" evidence="3">
    <location>
        <begin position="78"/>
        <end position="98"/>
    </location>
</feature>
<feature type="topological domain" description="Cytoplasmic" evidence="2">
    <location>
        <begin position="99"/>
        <end position="440"/>
    </location>
</feature>
<feature type="zinc finger region" description="C4-type; plays a role in ER morphology" evidence="2">
    <location>
        <begin position="280"/>
        <end position="305"/>
    </location>
</feature>
<feature type="region of interest" description="Disordered" evidence="4">
    <location>
        <begin position="149"/>
        <end position="169"/>
    </location>
</feature>
<feature type="region of interest" description="Disordered" evidence="4">
    <location>
        <begin position="202"/>
        <end position="247"/>
    </location>
</feature>
<feature type="region of interest" description="Disordered" evidence="4">
    <location>
        <begin position="316"/>
        <end position="440"/>
    </location>
</feature>
<feature type="coiled-coil region" evidence="3">
    <location>
        <begin position="16"/>
        <end position="40"/>
    </location>
</feature>
<feature type="coiled-coil region" evidence="3">
    <location>
        <begin position="100"/>
        <end position="128"/>
    </location>
</feature>
<feature type="compositionally biased region" description="Polar residues" evidence="4">
    <location>
        <begin position="216"/>
        <end position="225"/>
    </location>
</feature>
<feature type="compositionally biased region" description="Polar residues" evidence="4">
    <location>
        <begin position="334"/>
        <end position="343"/>
    </location>
</feature>
<feature type="compositionally biased region" description="Acidic residues" evidence="4">
    <location>
        <begin position="370"/>
        <end position="411"/>
    </location>
</feature>
<feature type="compositionally biased region" description="Acidic residues" evidence="4">
    <location>
        <begin position="431"/>
        <end position="440"/>
    </location>
</feature>
<feature type="modified residue" description="Phosphothreonine" evidence="5">
    <location>
        <position position="159"/>
    </location>
</feature>
<feature type="modified residue" description="Phosphoserine" evidence="5">
    <location>
        <position position="177"/>
    </location>
</feature>
<feature type="modified residue" description="Phosphoserine" evidence="5">
    <location>
        <position position="179"/>
    </location>
</feature>
<feature type="modified residue" description="Phosphoserine" evidence="5">
    <location>
        <position position="188"/>
    </location>
</feature>
<feature type="modified residue" description="Phosphoserine" evidence="5">
    <location>
        <position position="192"/>
    </location>
</feature>
<feature type="modified residue" description="Phosphothreonine" evidence="5">
    <location>
        <position position="198"/>
    </location>
</feature>
<feature type="modified residue" description="Phosphoserine" evidence="5">
    <location>
        <position position="206"/>
    </location>
</feature>
<feature type="modified residue" description="Phosphoserine" evidence="5">
    <location>
        <position position="215"/>
    </location>
</feature>
<feature type="modified residue" description="Phosphothreonine" evidence="5">
    <location>
        <position position="219"/>
    </location>
</feature>
<feature type="modified residue" description="Phosphoserine" evidence="5">
    <location>
        <position position="222"/>
    </location>
</feature>
<feature type="modified residue" description="Phosphoserine" evidence="5">
    <location>
        <position position="231"/>
    </location>
</feature>
<feature type="modified residue" description="Phosphoserine" evidence="5">
    <location>
        <position position="325"/>
    </location>
</feature>
<accession>Q6DFJ8</accession>
<name>LNP_XENLA</name>
<evidence type="ECO:0000250" key="1">
    <source>
        <dbReference type="UniProtKB" id="Q7TQ95"/>
    </source>
</evidence>
<evidence type="ECO:0000250" key="2">
    <source>
        <dbReference type="UniProtKB" id="Q9C0E8"/>
    </source>
</evidence>
<evidence type="ECO:0000255" key="3"/>
<evidence type="ECO:0000256" key="4">
    <source>
        <dbReference type="SAM" id="MobiDB-lite"/>
    </source>
</evidence>
<evidence type="ECO:0000269" key="5">
    <source>
    </source>
</evidence>
<evidence type="ECO:0000305" key="6"/>
<proteinExistence type="evidence at protein level"/>
<comment type="function">
    <text evidence="1 2 5">Endoplasmic reticulum (ER)-shaping membrane protein that plays a role in determining ER morphology. Involved in the stabilization of nascent three-way ER tubular junctions within the ER network (PubMed:27619977). May also play a role as a curvature-stabilizing protein within three-way ER tubular junction network (By similarity).</text>
</comment>
<comment type="subunit">
    <text evidence="5">Homodimer; homodimerization requires the C4-type zinc finger motif and decreases during mitosis in a phosphorylation-dependent manner (PubMed:27619977).</text>
</comment>
<comment type="subcellular location">
    <subcellularLocation>
        <location evidence="2">Endoplasmic reticulum membrane</location>
        <topology evidence="2">Multi-pass membrane protein</topology>
        <orientation evidence="2">Cytoplasmic side</orientation>
    </subcellularLocation>
    <text evidence="2">Localizes at endoplasmic reticulum (ER) three-way tubular junctions, which represent crossing-points at which the tubules build a polygonal network.</text>
</comment>
<comment type="domain">
    <text evidence="2">The transmembrane domain 1 and 2 function as a signal-anchor and stop-transfer sequence, respectively, generating a double-spanning integral membrane protein with a N- and C-terminal cytoplasmic orientation. Transmembrane domain 1 and 2 are probably sufficient to mediate membrane translocation and topology formation in a N-myristoylation-independent manner. Transmembrane domain 2 is sufficient to block the protein secretion pathway. The two coiled-coil domains are necessary for its endoplasmic reticulum (ER) three-way tubular junction localization. The C4-type zinc finger motif is necessary both for its ER three-way tubular junction localization and formation.</text>
</comment>
<comment type="PTM">
    <text evidence="5">Phosphorylated. Phosphorylation at Thr-159 and Ser-325 occurs during interphase (PubMed:27619977). Phosphorylation at Ser-177, Ser-179, Ser-188, Ser-192, Thr-198, Ser-206, Ser-215, Thr-219, Ser-222 and Ser-231 occurs during mitosis; these phosphorylations reduce both its homodimerization and the ER three-way tubular junction formation (PubMed:27619977).</text>
</comment>
<comment type="similarity">
    <text evidence="6">Belongs to the lunapark family.</text>
</comment>
<protein>
    <recommendedName>
        <fullName evidence="6">Endoplasmic reticulum junction formation protein lunapark</fullName>
    </recommendedName>
    <alternativeName>
        <fullName evidence="2">ER junction formation factor lunapark</fullName>
    </alternativeName>
</protein>
<keyword id="KW-0175">Coiled coil</keyword>
<keyword id="KW-0256">Endoplasmic reticulum</keyword>
<keyword id="KW-0472">Membrane</keyword>
<keyword id="KW-0479">Metal-binding</keyword>
<keyword id="KW-0597">Phosphoprotein</keyword>
<keyword id="KW-1185">Reference proteome</keyword>
<keyword id="KW-0812">Transmembrane</keyword>
<keyword id="KW-1133">Transmembrane helix</keyword>
<keyword id="KW-0862">Zinc</keyword>
<keyword id="KW-0863">Zinc-finger</keyword>
<dbReference type="EMBL" id="BC076738">
    <property type="protein sequence ID" value="AAH76738.1"/>
    <property type="molecule type" value="mRNA"/>
</dbReference>
<dbReference type="RefSeq" id="NP_001086514.1">
    <property type="nucleotide sequence ID" value="NM_001093045.1"/>
</dbReference>
<dbReference type="RefSeq" id="XP_018089910.1">
    <property type="nucleotide sequence ID" value="XM_018234421.1"/>
</dbReference>
<dbReference type="RefSeq" id="XP_018089911.1">
    <property type="nucleotide sequence ID" value="XM_018234422.1"/>
</dbReference>
<dbReference type="BioGRID" id="103209">
    <property type="interactions" value="1"/>
</dbReference>
<dbReference type="iPTMnet" id="Q6DFJ8"/>
<dbReference type="DNASU" id="446349"/>
<dbReference type="GeneID" id="446349"/>
<dbReference type="KEGG" id="xla:446349"/>
<dbReference type="AGR" id="Xenbase:XB-GENE-972748"/>
<dbReference type="CTD" id="446349"/>
<dbReference type="Xenbase" id="XB-GENE-972748">
    <property type="gene designation" value="lnpk.L"/>
</dbReference>
<dbReference type="OMA" id="CGYFNPS"/>
<dbReference type="OrthoDB" id="1725934at2759"/>
<dbReference type="Proteomes" id="UP000186698">
    <property type="component" value="Chromosome 9_10L"/>
</dbReference>
<dbReference type="Bgee" id="446349">
    <property type="expression patterns" value="Expressed in egg cell and 19 other cell types or tissues"/>
</dbReference>
<dbReference type="GO" id="GO:0005789">
    <property type="term" value="C:endoplasmic reticulum membrane"/>
    <property type="evidence" value="ECO:0000250"/>
    <property type="project" value="UniProtKB"/>
</dbReference>
<dbReference type="GO" id="GO:0071782">
    <property type="term" value="C:endoplasmic reticulum tubular network"/>
    <property type="evidence" value="ECO:0000318"/>
    <property type="project" value="GO_Central"/>
</dbReference>
<dbReference type="GO" id="GO:0098826">
    <property type="term" value="C:endoplasmic reticulum tubular network membrane"/>
    <property type="evidence" value="ECO:0000250"/>
    <property type="project" value="UniProtKB"/>
</dbReference>
<dbReference type="GO" id="GO:0042802">
    <property type="term" value="F:identical protein binding"/>
    <property type="evidence" value="ECO:0000314"/>
    <property type="project" value="UniProtKB"/>
</dbReference>
<dbReference type="GO" id="GO:0008270">
    <property type="term" value="F:zinc ion binding"/>
    <property type="evidence" value="ECO:0007669"/>
    <property type="project" value="UniProtKB-KW"/>
</dbReference>
<dbReference type="GO" id="GO:0071788">
    <property type="term" value="P:endoplasmic reticulum tubular network maintenance"/>
    <property type="evidence" value="ECO:0000315"/>
    <property type="project" value="UniProtKB"/>
</dbReference>
<dbReference type="GO" id="GO:0071786">
    <property type="term" value="P:endoplasmic reticulum tubular network organization"/>
    <property type="evidence" value="ECO:0000318"/>
    <property type="project" value="GO_Central"/>
</dbReference>
<dbReference type="GO" id="GO:1903373">
    <property type="term" value="P:positive regulation of endoplasmic reticulum tubular network organization"/>
    <property type="evidence" value="ECO:0000250"/>
    <property type="project" value="UniProtKB"/>
</dbReference>
<dbReference type="InterPro" id="IPR040115">
    <property type="entry name" value="Lnp"/>
</dbReference>
<dbReference type="InterPro" id="IPR019273">
    <property type="entry name" value="Lunapark_Znf"/>
</dbReference>
<dbReference type="PANTHER" id="PTHR22166">
    <property type="entry name" value="ENDOPLASMIC RETICULUM JUNCTION FORMATION PROTEIN LUNAPARK"/>
    <property type="match status" value="1"/>
</dbReference>
<dbReference type="PANTHER" id="PTHR22166:SF12">
    <property type="entry name" value="ENDOPLASMIC RETICULUM JUNCTION FORMATION PROTEIN LUNAPARK"/>
    <property type="match status" value="1"/>
</dbReference>
<dbReference type="Pfam" id="PF10058">
    <property type="entry name" value="Zn_ribbon_10"/>
    <property type="match status" value="1"/>
</dbReference>
<sequence>MGALLAKWRAKPSTVEVLEKMEKDIQSLEEFRDKNQKLRKIWVARLFFYSTILYILTSLTVYLWYLPGGMTARLLTTLLFLLFPVLIWFVRTLLILWFSRRTERNNDALELLKAEKKKILEEVMEKETYKAAKIILERFDPDSRKIKELELPVPGPPITPRPGQDLRQRTAAQRNISVSTPVNPGQGSPQVSGLLAATPALQRDTSAPGGPPERSVQPTPQSNILQRRPGSPATAVSGMALHPPGPPLARPILPRERGAMDRVIEYLVGDGPQNRYALICQQCFSHNGMALKEEFEYVAFRCAYCYFLNPARKTRPQAPRLQEISFDRQRQRTDSQGSVNTLQLPAADQLENQQSPEAMEEDSPAQAEEQAIEEQVIEEQVTEEQLIEDQVIEEDSTCSEQQWEEAPDDTEKDNLPAAEVNPSLPAPAANESEESFMETE</sequence>